<keyword id="KW-0002">3D-structure</keyword>
<keyword id="KW-0058">Aromatic hydrocarbons catabolism</keyword>
<keyword id="KW-0413">Isomerase</keyword>
<keyword id="KW-0614">Plasmid</keyword>
<evidence type="ECO:0000269" key="1">
    <source>
    </source>
</evidence>
<evidence type="ECO:0000269" key="2">
    <source>
    </source>
</evidence>
<evidence type="ECO:0000269" key="3">
    <source>
    </source>
</evidence>
<evidence type="ECO:0000305" key="4"/>
<evidence type="ECO:0000305" key="5">
    <source>
    </source>
</evidence>
<evidence type="ECO:0007829" key="6">
    <source>
        <dbReference type="PDB" id="2IMF"/>
    </source>
</evidence>
<dbReference type="EC" id="5.99.1.4"/>
<dbReference type="EMBL" id="U09057">
    <property type="protein sequence ID" value="AAA66358.1"/>
    <property type="molecule type" value="Genomic_DNA"/>
</dbReference>
<dbReference type="PIR" id="C55552">
    <property type="entry name" value="C55552"/>
</dbReference>
<dbReference type="RefSeq" id="WP_011475384.1">
    <property type="nucleotide sequence ID" value="NC_007926.1"/>
</dbReference>
<dbReference type="RefSeq" id="YP_534829.1">
    <property type="nucleotide sequence ID" value="NC_007926.1"/>
</dbReference>
<dbReference type="PDB" id="2IMD">
    <property type="method" value="X-ray"/>
    <property type="resolution" value="1.60 A"/>
    <property type="chains" value="A=1-203"/>
</dbReference>
<dbReference type="PDB" id="2IME">
    <property type="method" value="X-ray"/>
    <property type="resolution" value="1.70 A"/>
    <property type="chains" value="A=1-203"/>
</dbReference>
<dbReference type="PDB" id="2IMF">
    <property type="method" value="X-ray"/>
    <property type="resolution" value="1.30 A"/>
    <property type="chains" value="A=1-203"/>
</dbReference>
<dbReference type="PDBsum" id="2IMD"/>
<dbReference type="PDBsum" id="2IME"/>
<dbReference type="PDBsum" id="2IMF"/>
<dbReference type="SMR" id="Q51948"/>
<dbReference type="DrugBank" id="DB06952">
    <property type="generic name" value="(2S)-2-HYDROXY-2H-CHROMENE-2-CARBOXYLIC ACID"/>
</dbReference>
<dbReference type="DrugBank" id="DB08636">
    <property type="generic name" value="2-Hydroxybenzalpyruvate"/>
</dbReference>
<dbReference type="DrugBank" id="DB08637">
    <property type="generic name" value="4-(2-METHOXYPHENYL)-2-OXOBUT-3-ENOIC ACID"/>
</dbReference>
<dbReference type="KEGG" id="ag:AAA66358"/>
<dbReference type="BioCyc" id="MetaCyc:MONOMER-12808"/>
<dbReference type="BRENDA" id="5.99.1.4">
    <property type="organism ID" value="5092"/>
</dbReference>
<dbReference type="UniPathway" id="UPA00082"/>
<dbReference type="EvolutionaryTrace" id="Q51948"/>
<dbReference type="PRO" id="PR:Q51948"/>
<dbReference type="GO" id="GO:0018845">
    <property type="term" value="F:2-hydroxychromene-2-carboxylate isomerase activity"/>
    <property type="evidence" value="ECO:0000314"/>
    <property type="project" value="UniProtKB"/>
</dbReference>
<dbReference type="GO" id="GO:0004602">
    <property type="term" value="F:glutathione peroxidase activity"/>
    <property type="evidence" value="ECO:0007669"/>
    <property type="project" value="TreeGrafter"/>
</dbReference>
<dbReference type="GO" id="GO:0004364">
    <property type="term" value="F:glutathione transferase activity"/>
    <property type="evidence" value="ECO:0007669"/>
    <property type="project" value="TreeGrafter"/>
</dbReference>
<dbReference type="GO" id="GO:0006749">
    <property type="term" value="P:glutathione metabolic process"/>
    <property type="evidence" value="ECO:0007669"/>
    <property type="project" value="TreeGrafter"/>
</dbReference>
<dbReference type="GO" id="GO:1901170">
    <property type="term" value="P:naphthalene catabolic process"/>
    <property type="evidence" value="ECO:0000314"/>
    <property type="project" value="UniProtKB"/>
</dbReference>
<dbReference type="CDD" id="cd03022">
    <property type="entry name" value="DsbA_HCCA_Iso"/>
    <property type="match status" value="1"/>
</dbReference>
<dbReference type="FunFam" id="3.40.30.10:FF:000336">
    <property type="entry name" value="2-hydroxychromene-2-carboxylate isomerase"/>
    <property type="match status" value="1"/>
</dbReference>
<dbReference type="Gene3D" id="3.40.30.10">
    <property type="entry name" value="Glutaredoxin"/>
    <property type="match status" value="1"/>
</dbReference>
<dbReference type="InterPro" id="IPR001853">
    <property type="entry name" value="DSBA-like_thioredoxin_dom"/>
</dbReference>
<dbReference type="InterPro" id="IPR051924">
    <property type="entry name" value="GST_Kappa/NadH"/>
</dbReference>
<dbReference type="InterPro" id="IPR014440">
    <property type="entry name" value="HCCAis_GSTk"/>
</dbReference>
<dbReference type="InterPro" id="IPR044087">
    <property type="entry name" value="NahD-like"/>
</dbReference>
<dbReference type="InterPro" id="IPR036249">
    <property type="entry name" value="Thioredoxin-like_sf"/>
</dbReference>
<dbReference type="PANTHER" id="PTHR42943">
    <property type="entry name" value="GLUTATHIONE S-TRANSFERASE KAPPA"/>
    <property type="match status" value="1"/>
</dbReference>
<dbReference type="PANTHER" id="PTHR42943:SF2">
    <property type="entry name" value="GLUTATHIONE S-TRANSFERASE KAPPA 1"/>
    <property type="match status" value="1"/>
</dbReference>
<dbReference type="Pfam" id="PF01323">
    <property type="entry name" value="DSBA"/>
    <property type="match status" value="1"/>
</dbReference>
<dbReference type="PIRSF" id="PIRSF006386">
    <property type="entry name" value="HCCAis_GSTk"/>
    <property type="match status" value="1"/>
</dbReference>
<dbReference type="SUPFAM" id="SSF52833">
    <property type="entry name" value="Thioredoxin-like"/>
    <property type="match status" value="1"/>
</dbReference>
<feature type="chain" id="PRO_0000096700" description="2-hydroxychromene-2-carboxylate isomerase">
    <location>
        <begin position="1"/>
        <end position="203"/>
    </location>
</feature>
<feature type="active site" description="Nucleophile" evidence="5">
    <location>
        <position position="11"/>
    </location>
</feature>
<feature type="binding site" evidence="2">
    <location>
        <position position="11"/>
    </location>
    <ligand>
        <name>glutathione</name>
        <dbReference type="ChEBI" id="CHEBI:57925"/>
    </ligand>
</feature>
<feature type="binding site" evidence="2">
    <location>
        <position position="43"/>
    </location>
    <ligand>
        <name>substrate</name>
    </ligand>
</feature>
<feature type="binding site">
    <location>
        <begin position="53"/>
        <end position="54"/>
    </location>
    <ligand>
        <name>substrate</name>
    </ligand>
</feature>
<feature type="binding site" evidence="2">
    <location>
        <position position="84"/>
    </location>
    <ligand>
        <name>substrate</name>
    </ligand>
</feature>
<feature type="binding site" evidence="2">
    <location>
        <position position="168"/>
    </location>
    <ligand>
        <name>glutathione</name>
        <dbReference type="ChEBI" id="CHEBI:57925"/>
    </ligand>
</feature>
<feature type="binding site">
    <location>
        <begin position="179"/>
        <end position="182"/>
    </location>
    <ligand>
        <name>glutathione</name>
        <dbReference type="ChEBI" id="CHEBI:57925"/>
    </ligand>
</feature>
<feature type="strand" evidence="6">
    <location>
        <begin position="2"/>
        <end position="7"/>
    </location>
</feature>
<feature type="helix" evidence="6">
    <location>
        <begin position="12"/>
        <end position="28"/>
    </location>
</feature>
<feature type="strand" evidence="6">
    <location>
        <begin position="31"/>
        <end position="36"/>
    </location>
</feature>
<feature type="helix" evidence="6">
    <location>
        <begin position="39"/>
        <end position="46"/>
    </location>
</feature>
<feature type="helix" evidence="6">
    <location>
        <begin position="53"/>
        <end position="55"/>
    </location>
</feature>
<feature type="helix" evidence="6">
    <location>
        <begin position="57"/>
        <end position="74"/>
    </location>
</feature>
<feature type="helix" evidence="6">
    <location>
        <begin position="87"/>
        <end position="92"/>
    </location>
</feature>
<feature type="helix" evidence="6">
    <location>
        <begin position="93"/>
        <end position="95"/>
    </location>
</feature>
<feature type="helix" evidence="6">
    <location>
        <begin position="99"/>
        <end position="115"/>
    </location>
</feature>
<feature type="helix" evidence="6">
    <location>
        <begin position="125"/>
        <end position="133"/>
    </location>
</feature>
<feature type="helix" evidence="6">
    <location>
        <begin position="137"/>
        <end position="145"/>
    </location>
</feature>
<feature type="helix" evidence="6">
    <location>
        <begin position="147"/>
        <end position="162"/>
    </location>
</feature>
<feature type="strand" evidence="6">
    <location>
        <begin position="167"/>
        <end position="173"/>
    </location>
</feature>
<feature type="strand" evidence="6">
    <location>
        <begin position="176"/>
        <end position="180"/>
    </location>
</feature>
<feature type="helix" evidence="6">
    <location>
        <begin position="181"/>
        <end position="183"/>
    </location>
</feature>
<feature type="helix" evidence="6">
    <location>
        <begin position="184"/>
        <end position="198"/>
    </location>
</feature>
<sequence>MIVDFYFDFLSPFSYLANQRLSKLAQDYGLTIRYNAIDLARVKIAIGNVGPSNRDLKVKLDYLKVDLQRWAQLYGIPLVFPANYNSRRMNIGFYYSGAEAQAAAYVNVVFNAVWGEGIAPDLESLPALVSEKLGWDRSAFEHFLSSNAATERYDEQTHAAIERKVFGVPTMFLGDEMWWGNDRLFMLESAMGRLCRQNADLSS</sequence>
<proteinExistence type="evidence at protein level"/>
<reference key="1">
    <citation type="journal article" date="1994" name="J. Bacteriol.">
        <title>Organization and evolution of naphthalene catabolic pathways: sequence of the DNA encoding 2-hydroxychromene-2-carboxylate isomerase and trans-o-hydroxybenzylidenepyruvate hydratase-aldolase from the NAH7 plasmid.</title>
        <authorList>
            <person name="Eaton R.W."/>
        </authorList>
    </citation>
    <scope>NUCLEOTIDE SEQUENCE [GENOMIC DNA]</scope>
    <scope>FUNCTION</scope>
    <scope>NOMENCLATURE</scope>
    <source>
        <strain>ATCC 17485 / DSM 50208 / JCM 6158 / NCIMB 12092 / Stanier 111 / Biotype A</strain>
    </source>
</reference>
<reference key="2">
    <citation type="journal article" date="1992" name="J. Bacteriol.">
        <title>Bacterial metabolism of naphthalene: construction and use of recombinant bacteria to study ring cleavage of 1,2-dihydroxynaphthalene and subsequent reactions.</title>
        <authorList>
            <person name="Eaton R.W."/>
            <person name="Chapman P.J."/>
        </authorList>
    </citation>
    <scope>FUNCTION</scope>
    <scope>CATALYTIC ACTIVITY</scope>
    <scope>BIOPHYSICOCHEMICAL PROPERTIES</scope>
    <scope>COFACTOR</scope>
    <source>
        <strain>ATCC 17485 / DSM 50208 / JCM 6158 / NCIMB 12092 / Stanier 111 / Biotype A</strain>
    </source>
</reference>
<reference key="3">
    <citation type="journal article" date="2007" name="Biochemistry">
        <title>2-Hydroxychromene-2-carboxylic acid isomerase: a kappa class glutathione transferase from Pseudomonas putida.</title>
        <authorList>
            <person name="Thompson L.C."/>
            <person name="Ladner J.E."/>
            <person name="Codreanu S.G."/>
            <person name="Harp J."/>
            <person name="Gilliland G.L."/>
            <person name="Armstrong R.N."/>
        </authorList>
    </citation>
    <scope>X-RAY CRYSTALLOGRAPHY (1.30 ANGSTROMS) IN COMPLEX WITH SUBSTRATE AND GLUTATHIONE</scope>
    <scope>ACTIVE SITE</scope>
    <scope>BIOPHYSICOCHEMICAL PROPERTIES</scope>
    <scope>COFACTOR</scope>
    <scope>SUBUNIT</scope>
</reference>
<comment type="function">
    <text evidence="1 3">Involved in the naphthalene catabolic pathway. Catalyzes the reversible glutathione-dependent isomerization of 2-hydroxychromene-2-carboxylate (HCCA) to trans-O-hydroxybenzylidenepyruvate (THBPA).</text>
</comment>
<comment type="catalytic activity">
    <reaction evidence="1">
        <text>2-hydroxychromene-2-carboxylate = (3E)-4-(2-hydroxyphenyl)-2-oxobut-3-enoate</text>
        <dbReference type="Rhea" id="RHEA:27401"/>
        <dbReference type="ChEBI" id="CHEBI:59350"/>
        <dbReference type="ChEBI" id="CHEBI:59353"/>
        <dbReference type="EC" id="5.99.1.4"/>
    </reaction>
</comment>
<comment type="cofactor">
    <cofactor evidence="1 2">
        <name>glutathione</name>
        <dbReference type="ChEBI" id="CHEBI:57925"/>
    </cofactor>
    <text evidence="1 2">Glutathione seems to stabilize the enzyme, which loses activity rapidly in the absence of this compound.</text>
</comment>
<comment type="biophysicochemical properties">
    <kinetics>
        <KM evidence="1 2">0.2 mM for HCCA (at pH 10)</KM>
        <KM evidence="1 2">17 uM for glutathione (at pH 7 and 25 degrees Celsius)</KM>
        <KM evidence="1 2">84 uM for HCCA (at pH 7 and 25 degrees Celsius)</KM>
        <KM evidence="1 2">138 uM for THBPA (at pH 7 and 25 degrees Celsius)</KM>
        <text>kcat is 47 sec(-1) for HCCA, 19 sec(-1) for THBPA and 39 sec(-1) for glutathion.</text>
    </kinetics>
    <phDependence>
        <text evidence="1 2">Optimum pH is 10.</text>
    </phDependence>
</comment>
<comment type="pathway">
    <text>Aromatic compound metabolism; naphthalene degradation.</text>
</comment>
<comment type="similarity">
    <text evidence="4">Belongs to the GST superfamily. NadH family.</text>
</comment>
<protein>
    <recommendedName>
        <fullName>2-hydroxychromene-2-carboxylate isomerase</fullName>
        <shortName>HCCA isomerase</shortName>
        <ecNumber>5.99.1.4</ecNumber>
    </recommendedName>
</protein>
<gene>
    <name type="primary">nahD</name>
</gene>
<organism>
    <name type="scientific">Pseudomonas putida</name>
    <name type="common">Arthrobacter siderocapsulatus</name>
    <dbReference type="NCBI Taxonomy" id="303"/>
    <lineage>
        <taxon>Bacteria</taxon>
        <taxon>Pseudomonadati</taxon>
        <taxon>Pseudomonadota</taxon>
        <taxon>Gammaproteobacteria</taxon>
        <taxon>Pseudomonadales</taxon>
        <taxon>Pseudomonadaceae</taxon>
        <taxon>Pseudomonas</taxon>
    </lineage>
</organism>
<accession>Q51948</accession>
<name>NAHD_PSEPU</name>
<geneLocation type="plasmid">
    <name>NAH7</name>
</geneLocation>